<comment type="function">
    <text evidence="1 2 5">Has an actin-binding and actin-bundling activity (PubMed:11673475). Can induce the formation of F-actin networks. At the sarcomeric Z lines is proposed to act as adapter protein that links nascent myofibers to the sarcolemma via ZYX and may play a role in early assembly and stabilization of the Z lines. Involved in autophagosome formation. May play a role in chaperone-assisted selective autophagy (CASA) involved in Z lines maintenance in striated muscle under mechanical tension; may link the client-processing CASA chaperone machinery to a membrane-tethering and fusion complex providing autophagosome membranes. Involved in regulation of cell migration. May be a tumor suppressor (By similarity).</text>
</comment>
<comment type="subunit">
    <text evidence="1 2 5 6 8">May self-associate in muscle cells under oxidative stress (By similarity). Binds F-actin (PubMed:11673475). Interacts with ACTN2; ACTN2 is proposed to anchor SYOP2 at Z lines in mature myocytes. Interacts with AKAP6, PPP3CA and CAMK2A. Interacts (phosphorylated form) with YWHAB; YWHAB competes with ACTN2 for interaction with SYNPO2 (PubMed:15883195, PubMed:17923693). Interacts with KPNA2; mediating nuclear import of SYNOP2; dependent on interaction with YWHAB (PubMed:15883195). Interacts with IPO13; may be implicated in SYNOP2 nuclear import (By similarity). Interacts with ZYX, FLNC, ILK. Interacts with BAG3 (via WW 1 domain). May associate with the CASA complex consisting of HSPA8, HSPB8 and BAG3. Interacts with VPS18 (By similarity).</text>
</comment>
<comment type="interaction">
    <interactant intactId="EBI-7623057">
        <id>Q91YE8</id>
    </interactant>
    <interactant intactId="EBI-771608">
        <id>Q9CQV8</id>
        <label>Ywhab</label>
    </interactant>
    <organismsDiffer>false</organismsDiffer>
    <experiments>3</experiments>
</comment>
<comment type="interaction">
    <interactant intactId="EBI-7623057">
        <id>Q91YE8</id>
    </interactant>
    <interactant intactId="EBI-359815">
        <id>P31946</id>
        <label>YWHAB</label>
    </interactant>
    <organismsDiffer>true</organismsDiffer>
    <experiments>3</experiments>
</comment>
<comment type="subcellular location">
    <subcellularLocation>
        <location evidence="5 7 8">Nucleus</location>
    </subcellularLocation>
    <subcellularLocation>
        <location evidence="5 8">Cytoplasm</location>
    </subcellularLocation>
    <subcellularLocation>
        <location evidence="5">Cytoplasm</location>
        <location evidence="5">Myofibril</location>
        <location evidence="5">Sarcomere</location>
        <location evidence="5">Z line</location>
    </subcellularLocation>
    <subcellularLocation>
        <location evidence="2">Cell junction</location>
        <location evidence="2">Focal adhesion</location>
    </subcellularLocation>
    <text evidence="2 5 8">Shuttles between the nucleus and the cytoplasm in a differentiation-dependent and stress-induced fashion. In undifferentiated myoblasts strongly expressed in the nucleus, after induction of myotube differentiation is located to both nucleus and cytoplasm along acting filaments, and in differentiated myotubes is located at the Z lines. Upon stress redistributes from cytoplasm of myoblasts and myotubes to the nucleus. Nuclear import is KPNA2-dependent and promoted by phosphorylation by PKA and/or CaMK2, and inhibition of calcineurin. The nuclear export is XPO1-dependent (PubMed:11673475, PubMed:15883195, PubMed:17923693).</text>
</comment>
<comment type="alternative products">
    <event type="alternative splicing"/>
    <isoform>
        <id>Q91YE8-1</id>
        <name>1</name>
        <sequence type="displayed"/>
    </isoform>
    <isoform>
        <id>Q91YE8-2</id>
        <name>2</name>
        <sequence type="described" ref="VSP_011493 VSP_011494"/>
    </isoform>
</comment>
<comment type="tissue specificity">
    <text evidence="5">Expressed in skeletal muscle, heart, colon, stomach, uterus and lung. Expression is restricted to muscle cell layers in colon, uterus and stomach.</text>
</comment>
<comment type="domain">
    <text evidence="2">The PPPY motif interacts with the WW domain 1 of BAG3.</text>
</comment>
<comment type="PTM">
    <text evidence="8">Phosphorylated by PKA, and by CaMK2 at multiple sites. Dephosphorylated by calcineurin at Ser-555 and Thr-602; abrogating interaction with YWHAB and impairing nuclear import.</text>
</comment>
<comment type="similarity">
    <text evidence="9">Belongs to the synaptopodin family.</text>
</comment>
<keyword id="KW-0009">Actin-binding</keyword>
<keyword id="KW-0025">Alternative splicing</keyword>
<keyword id="KW-0965">Cell junction</keyword>
<keyword id="KW-0963">Cytoplasm</keyword>
<keyword id="KW-0514">Muscle protein</keyword>
<keyword id="KW-0539">Nucleus</keyword>
<keyword id="KW-0597">Phosphoprotein</keyword>
<keyword id="KW-1185">Reference proteome</keyword>
<keyword id="KW-0043">Tumor suppressor</keyword>
<dbReference type="EMBL" id="AJ306625">
    <property type="protein sequence ID" value="CAC67798.1"/>
    <property type="molecule type" value="mRNA"/>
</dbReference>
<dbReference type="EMBL" id="AC121315">
    <property type="status" value="NOT_ANNOTATED_CDS"/>
    <property type="molecule type" value="Genomic_DNA"/>
</dbReference>
<dbReference type="EMBL" id="AC121540">
    <property type="status" value="NOT_ANNOTATED_CDS"/>
    <property type="molecule type" value="Genomic_DNA"/>
</dbReference>
<dbReference type="EMBL" id="AK079194">
    <property type="protein sequence ID" value="BAC37575.1"/>
    <property type="molecule type" value="mRNA"/>
</dbReference>
<dbReference type="RefSeq" id="NP_001375431.1">
    <molecule id="Q91YE8-1"/>
    <property type="nucleotide sequence ID" value="NM_001388502.1"/>
</dbReference>
<dbReference type="SMR" id="Q91YE8"/>
<dbReference type="FunCoup" id="Q91YE8">
    <property type="interactions" value="1052"/>
</dbReference>
<dbReference type="IntAct" id="Q91YE8">
    <property type="interactions" value="3"/>
</dbReference>
<dbReference type="MINT" id="Q91YE8"/>
<dbReference type="STRING" id="10090.ENSMUSP00000102034"/>
<dbReference type="GlyGen" id="Q91YE8">
    <property type="glycosylation" value="5 sites, 1 N-linked glycan (1 site), 1 O-linked glycan (3 sites)"/>
</dbReference>
<dbReference type="iPTMnet" id="Q91YE8"/>
<dbReference type="PhosphoSitePlus" id="Q91YE8"/>
<dbReference type="jPOST" id="Q91YE8"/>
<dbReference type="PaxDb" id="10090-ENSMUSP00000102034"/>
<dbReference type="ProteomicsDB" id="263189">
    <molecule id="Q91YE8-1"/>
</dbReference>
<dbReference type="ProteomicsDB" id="263190">
    <molecule id="Q91YE8-2"/>
</dbReference>
<dbReference type="Pumba" id="Q91YE8"/>
<dbReference type="Antibodypedia" id="48857">
    <property type="antibodies" value="86 antibodies from 25 providers"/>
</dbReference>
<dbReference type="Ensembl" id="ENSMUST00000198584.2">
    <molecule id="Q91YE8-1"/>
    <property type="protein sequence ID" value="ENSMUSP00000142508.2"/>
    <property type="gene ID" value="ENSMUSG00000050315.15"/>
</dbReference>
<dbReference type="GeneID" id="118449"/>
<dbReference type="AGR" id="MGI:2153070"/>
<dbReference type="MGI" id="MGI:2153070">
    <property type="gene designation" value="Synpo2"/>
</dbReference>
<dbReference type="VEuPathDB" id="HostDB:ENSMUSG00000050315"/>
<dbReference type="eggNOG" id="KOG1703">
    <property type="taxonomic scope" value="Eukaryota"/>
</dbReference>
<dbReference type="GeneTree" id="ENSGT00950000183054"/>
<dbReference type="HOGENOM" id="CLU_007120_1_1_1"/>
<dbReference type="InParanoid" id="Q91YE8"/>
<dbReference type="PhylomeDB" id="Q91YE8"/>
<dbReference type="ChiTaRS" id="Synpo2">
    <property type="organism name" value="mouse"/>
</dbReference>
<dbReference type="PRO" id="PR:Q91YE8"/>
<dbReference type="Proteomes" id="UP000000589">
    <property type="component" value="Chromosome 3"/>
</dbReference>
<dbReference type="RNAct" id="Q91YE8">
    <property type="molecule type" value="protein"/>
</dbReference>
<dbReference type="Bgee" id="ENSMUSG00000050315">
    <property type="expression patterns" value="Expressed in triceps brachii and 178 other cell types or tissues"/>
</dbReference>
<dbReference type="ExpressionAtlas" id="Q91YE8">
    <property type="expression patterns" value="baseline and differential"/>
</dbReference>
<dbReference type="GO" id="GO:0005925">
    <property type="term" value="C:focal adhesion"/>
    <property type="evidence" value="ECO:0007669"/>
    <property type="project" value="UniProtKB-SubCell"/>
</dbReference>
<dbReference type="GO" id="GO:0005634">
    <property type="term" value="C:nucleus"/>
    <property type="evidence" value="ECO:0000314"/>
    <property type="project" value="UniProtKB"/>
</dbReference>
<dbReference type="GO" id="GO:0030018">
    <property type="term" value="C:Z disc"/>
    <property type="evidence" value="ECO:0000250"/>
    <property type="project" value="UniProtKB"/>
</dbReference>
<dbReference type="GO" id="GO:0071889">
    <property type="term" value="F:14-3-3 protein binding"/>
    <property type="evidence" value="ECO:0000314"/>
    <property type="project" value="UniProtKB"/>
</dbReference>
<dbReference type="GO" id="GO:0003779">
    <property type="term" value="F:actin binding"/>
    <property type="evidence" value="ECO:0000247"/>
    <property type="project" value="MGI"/>
</dbReference>
<dbReference type="GO" id="GO:0051371">
    <property type="term" value="F:muscle alpha-actinin binding"/>
    <property type="evidence" value="ECO:0000314"/>
    <property type="project" value="UniProtKB"/>
</dbReference>
<dbReference type="CDD" id="cd10820">
    <property type="entry name" value="PDZ_SYNPO2-like"/>
    <property type="match status" value="1"/>
</dbReference>
<dbReference type="FunFam" id="2.30.42.10:FF:000139">
    <property type="entry name" value="synaptopodin-2 isoform X1"/>
    <property type="match status" value="1"/>
</dbReference>
<dbReference type="Gene3D" id="2.30.42.10">
    <property type="match status" value="1"/>
</dbReference>
<dbReference type="InterPro" id="IPR001478">
    <property type="entry name" value="PDZ"/>
</dbReference>
<dbReference type="InterPro" id="IPR036034">
    <property type="entry name" value="PDZ_sf"/>
</dbReference>
<dbReference type="InterPro" id="IPR051976">
    <property type="entry name" value="Synaptopodin_domain"/>
</dbReference>
<dbReference type="PANTHER" id="PTHR24217">
    <property type="entry name" value="PUTATIVE-RELATED"/>
    <property type="match status" value="1"/>
</dbReference>
<dbReference type="PANTHER" id="PTHR24217:SF9">
    <property type="entry name" value="SYNAPTOPODIN-2"/>
    <property type="match status" value="1"/>
</dbReference>
<dbReference type="Pfam" id="PF00595">
    <property type="entry name" value="PDZ"/>
    <property type="match status" value="1"/>
</dbReference>
<dbReference type="SMART" id="SM00228">
    <property type="entry name" value="PDZ"/>
    <property type="match status" value="1"/>
</dbReference>
<dbReference type="SUPFAM" id="SSF50156">
    <property type="entry name" value="PDZ domain-like"/>
    <property type="match status" value="1"/>
</dbReference>
<dbReference type="PROSITE" id="PS50106">
    <property type="entry name" value="PDZ"/>
    <property type="match status" value="1"/>
</dbReference>
<organism>
    <name type="scientific">Mus musculus</name>
    <name type="common">Mouse</name>
    <dbReference type="NCBI Taxonomy" id="10090"/>
    <lineage>
        <taxon>Eukaryota</taxon>
        <taxon>Metazoa</taxon>
        <taxon>Chordata</taxon>
        <taxon>Craniata</taxon>
        <taxon>Vertebrata</taxon>
        <taxon>Euteleostomi</taxon>
        <taxon>Mammalia</taxon>
        <taxon>Eutheria</taxon>
        <taxon>Euarchontoglires</taxon>
        <taxon>Glires</taxon>
        <taxon>Rodentia</taxon>
        <taxon>Myomorpha</taxon>
        <taxon>Muroidea</taxon>
        <taxon>Muridae</taxon>
        <taxon>Murinae</taxon>
        <taxon>Mus</taxon>
        <taxon>Mus</taxon>
    </lineage>
</organism>
<evidence type="ECO:0000250" key="1">
    <source>
        <dbReference type="UniProtKB" id="D4A702"/>
    </source>
</evidence>
<evidence type="ECO:0000250" key="2">
    <source>
        <dbReference type="UniProtKB" id="Q9UMS6"/>
    </source>
</evidence>
<evidence type="ECO:0000255" key="3">
    <source>
        <dbReference type="PROSITE-ProRule" id="PRU00143"/>
    </source>
</evidence>
<evidence type="ECO:0000256" key="4">
    <source>
        <dbReference type="SAM" id="MobiDB-lite"/>
    </source>
</evidence>
<evidence type="ECO:0000269" key="5">
    <source>
    </source>
</evidence>
<evidence type="ECO:0000269" key="6">
    <source>
    </source>
</evidence>
<evidence type="ECO:0000269" key="7">
    <source>
    </source>
</evidence>
<evidence type="ECO:0000269" key="8">
    <source>
    </source>
</evidence>
<evidence type="ECO:0000305" key="9"/>
<evidence type="ECO:0007744" key="10">
    <source>
    </source>
</evidence>
<proteinExistence type="evidence at protein level"/>
<feature type="chain" id="PRO_0000187674" description="Synaptopodin-2">
    <location>
        <begin position="1"/>
        <end position="1087"/>
    </location>
</feature>
<feature type="domain" description="PDZ" evidence="3">
    <location>
        <begin position="6"/>
        <end position="88"/>
    </location>
</feature>
<feature type="region of interest" description="Disordered" evidence="4">
    <location>
        <begin position="24"/>
        <end position="52"/>
    </location>
</feature>
<feature type="region of interest" description="Disordered" evidence="4">
    <location>
        <begin position="88"/>
        <end position="112"/>
    </location>
</feature>
<feature type="region of interest" description="Disordered" evidence="4">
    <location>
        <begin position="207"/>
        <end position="272"/>
    </location>
</feature>
<feature type="region of interest" description="Disordered" evidence="4">
    <location>
        <begin position="320"/>
        <end position="359"/>
    </location>
</feature>
<feature type="region of interest" description="Interaction with YWHAB" evidence="6">
    <location>
        <begin position="551"/>
        <end position="557"/>
    </location>
</feature>
<feature type="region of interest" description="Disordered" evidence="4">
    <location>
        <begin position="581"/>
        <end position="817"/>
    </location>
</feature>
<feature type="region of interest" description="Interaction with YWHAB" evidence="6">
    <location>
        <begin position="599"/>
        <end position="804"/>
    </location>
</feature>
<feature type="region of interest" description="Interaction with ACTN2" evidence="2">
    <location>
        <begin position="656"/>
        <end position="917"/>
    </location>
</feature>
<feature type="region of interest" description="F-actin bundling activity" evidence="2">
    <location>
        <begin position="656"/>
        <end position="909"/>
    </location>
</feature>
<feature type="region of interest" description="F-actin binding" evidence="2">
    <location>
        <begin position="656"/>
        <end position="796"/>
    </location>
</feature>
<feature type="region of interest" description="Actin binding" evidence="5">
    <location>
        <begin position="740"/>
        <end position="893"/>
    </location>
</feature>
<feature type="region of interest" description="Interaction with FLNC" evidence="2">
    <location>
        <begin position="803"/>
        <end position="1087"/>
    </location>
</feature>
<feature type="region of interest" description="Disordered" evidence="4">
    <location>
        <begin position="832"/>
        <end position="863"/>
    </location>
</feature>
<feature type="region of interest" description="Interaction with ACTN2" evidence="2">
    <location>
        <begin position="894"/>
        <end position="1087"/>
    </location>
</feature>
<feature type="region of interest" description="Disordered" evidence="4">
    <location>
        <begin position="930"/>
        <end position="952"/>
    </location>
</feature>
<feature type="region of interest" description="Disordered" evidence="4">
    <location>
        <begin position="970"/>
        <end position="1012"/>
    </location>
</feature>
<feature type="region of interest" description="Interaction with ZYX" evidence="2">
    <location>
        <begin position="993"/>
        <end position="1012"/>
    </location>
</feature>
<feature type="region of interest" description="Disordered" evidence="4">
    <location>
        <begin position="1037"/>
        <end position="1060"/>
    </location>
</feature>
<feature type="short sequence motif" description="Nuclear localization signal" evidence="7">
    <location>
        <begin position="388"/>
        <end position="396"/>
    </location>
</feature>
<feature type="short sequence motif" description="PPPY motif" evidence="2">
    <location>
        <begin position="611"/>
        <end position="614"/>
    </location>
</feature>
<feature type="compositionally biased region" description="Basic and acidic residues" evidence="4">
    <location>
        <begin position="101"/>
        <end position="112"/>
    </location>
</feature>
<feature type="compositionally biased region" description="Polar residues" evidence="4">
    <location>
        <begin position="207"/>
        <end position="230"/>
    </location>
</feature>
<feature type="compositionally biased region" description="Polar residues" evidence="4">
    <location>
        <begin position="246"/>
        <end position="255"/>
    </location>
</feature>
<feature type="compositionally biased region" description="Basic and acidic residues" evidence="4">
    <location>
        <begin position="322"/>
        <end position="337"/>
    </location>
</feature>
<feature type="compositionally biased region" description="Basic residues" evidence="4">
    <location>
        <begin position="338"/>
        <end position="348"/>
    </location>
</feature>
<feature type="compositionally biased region" description="Basic and acidic residues" evidence="4">
    <location>
        <begin position="349"/>
        <end position="359"/>
    </location>
</feature>
<feature type="compositionally biased region" description="Pro residues" evidence="4">
    <location>
        <begin position="609"/>
        <end position="622"/>
    </location>
</feature>
<feature type="compositionally biased region" description="Pro residues" evidence="4">
    <location>
        <begin position="636"/>
        <end position="647"/>
    </location>
</feature>
<feature type="compositionally biased region" description="Low complexity" evidence="4">
    <location>
        <begin position="751"/>
        <end position="777"/>
    </location>
</feature>
<feature type="compositionally biased region" description="Polar residues" evidence="4">
    <location>
        <begin position="781"/>
        <end position="797"/>
    </location>
</feature>
<feature type="compositionally biased region" description="Low complexity" evidence="4">
    <location>
        <begin position="1037"/>
        <end position="1051"/>
    </location>
</feature>
<feature type="modified residue" description="Phosphoserine" evidence="10">
    <location>
        <position position="300"/>
    </location>
</feature>
<feature type="modified residue" description="Phosphoserine" evidence="1">
    <location>
        <position position="319"/>
    </location>
</feature>
<feature type="modified residue" description="Phosphoserine" evidence="1">
    <location>
        <position position="320"/>
    </location>
</feature>
<feature type="modified residue" description="Phosphothreonine" evidence="1">
    <location>
        <position position="323"/>
    </location>
</feature>
<feature type="modified residue" description="Phosphoserine" evidence="1">
    <location>
        <position position="540"/>
    </location>
</feature>
<feature type="modified residue" description="Phosphoserine" evidence="10">
    <location>
        <position position="541"/>
    </location>
</feature>
<feature type="modified residue" description="Phosphoserine" evidence="10">
    <location>
        <position position="543"/>
    </location>
</feature>
<feature type="modified residue" description="Phosphoserine" evidence="10">
    <location>
        <position position="546"/>
    </location>
</feature>
<feature type="modified residue" description="Phosphoserine; by PKA" evidence="8">
    <location>
        <position position="555"/>
    </location>
</feature>
<feature type="modified residue" description="Phosphoserine" evidence="10">
    <location>
        <position position="596"/>
    </location>
</feature>
<feature type="modified residue" description="Phosphothreonine; by PKA and CaMK2" evidence="8">
    <location>
        <position position="602"/>
    </location>
</feature>
<feature type="modified residue" description="Phosphoserine" evidence="10">
    <location>
        <position position="603"/>
    </location>
</feature>
<feature type="modified residue" description="Phosphotyrosine" evidence="2">
    <location>
        <position position="614"/>
    </location>
</feature>
<feature type="modified residue" description="Phosphoserine" evidence="10">
    <location>
        <position position="618"/>
    </location>
</feature>
<feature type="modified residue" description="Phosphoserine" evidence="1">
    <location>
        <position position="697"/>
    </location>
</feature>
<feature type="modified residue" description="Phosphoserine" evidence="2">
    <location>
        <position position="719"/>
    </location>
</feature>
<feature type="modified residue" description="Phosphothreonine" evidence="2">
    <location>
        <position position="744"/>
    </location>
</feature>
<feature type="modified residue" description="Phosphoserine" evidence="10">
    <location>
        <position position="767"/>
    </location>
</feature>
<feature type="modified residue" description="Phosphoserine" evidence="10">
    <location>
        <position position="771"/>
    </location>
</feature>
<feature type="modified residue" description="Phosphoserine" evidence="10">
    <location>
        <position position="895"/>
    </location>
</feature>
<feature type="modified residue" description="Phosphoserine" evidence="10">
    <location>
        <position position="899"/>
    </location>
</feature>
<feature type="modified residue" description="Phosphoserine" evidence="1">
    <location>
        <position position="903"/>
    </location>
</feature>
<feature type="modified residue" description="Phosphoserine" evidence="1">
    <location>
        <position position="1008"/>
    </location>
</feature>
<feature type="modified residue" description="Phosphoserine" evidence="2">
    <location>
        <position position="1050"/>
    </location>
</feature>
<feature type="splice variant" id="VSP_011493" description="In isoform 2." evidence="9">
    <location>
        <begin position="1"/>
        <end position="330"/>
    </location>
</feature>
<feature type="splice variant" id="VSP_011494" description="In isoform 2." evidence="9">
    <original>SGKDQSRPHKHRARHAR</original>
    <variation>MIPCSHQFSTICVLSPG</variation>
    <location>
        <begin position="331"/>
        <end position="347"/>
    </location>
</feature>
<feature type="mutagenesis site" description="Impairs interaction with YWHAB." evidence="6">
    <original>S</original>
    <variation>A</variation>
    <location>
        <position position="555"/>
    </location>
</feature>
<feature type="mutagenesis site" description="Impairs interaction with YWHAB." evidence="6">
    <original>T</original>
    <variation>A</variation>
    <location>
        <position position="602"/>
    </location>
</feature>
<feature type="sequence conflict" description="In Ref. 3; BAC37575." evidence="9" ref="3">
    <original>Q</original>
    <variation>E</variation>
    <location>
        <position position="894"/>
    </location>
</feature>
<feature type="sequence conflict" description="In Ref. 3; BAC37575." evidence="9" ref="3">
    <original>K</original>
    <variation>E</variation>
    <location>
        <position position="1067"/>
    </location>
</feature>
<protein>
    <recommendedName>
        <fullName>Synaptopodin-2</fullName>
    </recommendedName>
    <alternativeName>
        <fullName>Myopodin</fullName>
    </alternativeName>
</protein>
<reference key="1">
    <citation type="journal article" date="2001" name="J. Cell Biol.">
        <title>Differentiation and stress-dependent nuclear-cytoplasmic redistribution of myopodin, a novel actin bundling protein.</title>
        <authorList>
            <person name="Weins A."/>
            <person name="Schwarz K."/>
            <person name="Faul C."/>
            <person name="Barisoni L."/>
            <person name="Linke W.A."/>
            <person name="Mundel P."/>
        </authorList>
    </citation>
    <scope>NUCLEOTIDE SEQUENCE [MRNA] (ISOFORM 2)</scope>
    <scope>TISSUE SPECIFICITY</scope>
    <scope>SUBCELLULAR LOCATION</scope>
    <scope>FUNCTION</scope>
    <scope>INTERACTION WITH ACTIN</scope>
    <source>
        <strain>129S6/SvEvTac</strain>
        <tissue>Muscle</tissue>
    </source>
</reference>
<reference key="2">
    <citation type="journal article" date="2009" name="PLoS Biol.">
        <title>Lineage-specific biology revealed by a finished genome assembly of the mouse.</title>
        <authorList>
            <person name="Church D.M."/>
            <person name="Goodstadt L."/>
            <person name="Hillier L.W."/>
            <person name="Zody M.C."/>
            <person name="Goldstein S."/>
            <person name="She X."/>
            <person name="Bult C.J."/>
            <person name="Agarwala R."/>
            <person name="Cherry J.L."/>
            <person name="DiCuccio M."/>
            <person name="Hlavina W."/>
            <person name="Kapustin Y."/>
            <person name="Meric P."/>
            <person name="Maglott D."/>
            <person name="Birtle Z."/>
            <person name="Marques A.C."/>
            <person name="Graves T."/>
            <person name="Zhou S."/>
            <person name="Teague B."/>
            <person name="Potamousis K."/>
            <person name="Churas C."/>
            <person name="Place M."/>
            <person name="Herschleb J."/>
            <person name="Runnheim R."/>
            <person name="Forrest D."/>
            <person name="Amos-Landgraf J."/>
            <person name="Schwartz D.C."/>
            <person name="Cheng Z."/>
            <person name="Lindblad-Toh K."/>
            <person name="Eichler E.E."/>
            <person name="Ponting C.P."/>
        </authorList>
    </citation>
    <scope>NUCLEOTIDE SEQUENCE [LARGE SCALE GENOMIC DNA] (ISOFORM 1)</scope>
    <source>
        <strain>C57BL/6J</strain>
    </source>
</reference>
<reference key="3">
    <citation type="journal article" date="2005" name="Science">
        <title>The transcriptional landscape of the mammalian genome.</title>
        <authorList>
            <person name="Carninci P."/>
            <person name="Kasukawa T."/>
            <person name="Katayama S."/>
            <person name="Gough J."/>
            <person name="Frith M.C."/>
            <person name="Maeda N."/>
            <person name="Oyama R."/>
            <person name="Ravasi T."/>
            <person name="Lenhard B."/>
            <person name="Wells C."/>
            <person name="Kodzius R."/>
            <person name="Shimokawa K."/>
            <person name="Bajic V.B."/>
            <person name="Brenner S.E."/>
            <person name="Batalov S."/>
            <person name="Forrest A.R."/>
            <person name="Zavolan M."/>
            <person name="Davis M.J."/>
            <person name="Wilming L.G."/>
            <person name="Aidinis V."/>
            <person name="Allen J.E."/>
            <person name="Ambesi-Impiombato A."/>
            <person name="Apweiler R."/>
            <person name="Aturaliya R.N."/>
            <person name="Bailey T.L."/>
            <person name="Bansal M."/>
            <person name="Baxter L."/>
            <person name="Beisel K.W."/>
            <person name="Bersano T."/>
            <person name="Bono H."/>
            <person name="Chalk A.M."/>
            <person name="Chiu K.P."/>
            <person name="Choudhary V."/>
            <person name="Christoffels A."/>
            <person name="Clutterbuck D.R."/>
            <person name="Crowe M.L."/>
            <person name="Dalla E."/>
            <person name="Dalrymple B.P."/>
            <person name="de Bono B."/>
            <person name="Della Gatta G."/>
            <person name="di Bernardo D."/>
            <person name="Down T."/>
            <person name="Engstrom P."/>
            <person name="Fagiolini M."/>
            <person name="Faulkner G."/>
            <person name="Fletcher C.F."/>
            <person name="Fukushima T."/>
            <person name="Furuno M."/>
            <person name="Futaki S."/>
            <person name="Gariboldi M."/>
            <person name="Georgii-Hemming P."/>
            <person name="Gingeras T.R."/>
            <person name="Gojobori T."/>
            <person name="Green R.E."/>
            <person name="Gustincich S."/>
            <person name="Harbers M."/>
            <person name="Hayashi Y."/>
            <person name="Hensch T.K."/>
            <person name="Hirokawa N."/>
            <person name="Hill D."/>
            <person name="Huminiecki L."/>
            <person name="Iacono M."/>
            <person name="Ikeo K."/>
            <person name="Iwama A."/>
            <person name="Ishikawa T."/>
            <person name="Jakt M."/>
            <person name="Kanapin A."/>
            <person name="Katoh M."/>
            <person name="Kawasawa Y."/>
            <person name="Kelso J."/>
            <person name="Kitamura H."/>
            <person name="Kitano H."/>
            <person name="Kollias G."/>
            <person name="Krishnan S.P."/>
            <person name="Kruger A."/>
            <person name="Kummerfeld S.K."/>
            <person name="Kurochkin I.V."/>
            <person name="Lareau L.F."/>
            <person name="Lazarevic D."/>
            <person name="Lipovich L."/>
            <person name="Liu J."/>
            <person name="Liuni S."/>
            <person name="McWilliam S."/>
            <person name="Madan Babu M."/>
            <person name="Madera M."/>
            <person name="Marchionni L."/>
            <person name="Matsuda H."/>
            <person name="Matsuzawa S."/>
            <person name="Miki H."/>
            <person name="Mignone F."/>
            <person name="Miyake S."/>
            <person name="Morris K."/>
            <person name="Mottagui-Tabar S."/>
            <person name="Mulder N."/>
            <person name="Nakano N."/>
            <person name="Nakauchi H."/>
            <person name="Ng P."/>
            <person name="Nilsson R."/>
            <person name="Nishiguchi S."/>
            <person name="Nishikawa S."/>
            <person name="Nori F."/>
            <person name="Ohara O."/>
            <person name="Okazaki Y."/>
            <person name="Orlando V."/>
            <person name="Pang K.C."/>
            <person name="Pavan W.J."/>
            <person name="Pavesi G."/>
            <person name="Pesole G."/>
            <person name="Petrovsky N."/>
            <person name="Piazza S."/>
            <person name="Reed J."/>
            <person name="Reid J.F."/>
            <person name="Ring B.Z."/>
            <person name="Ringwald M."/>
            <person name="Rost B."/>
            <person name="Ruan Y."/>
            <person name="Salzberg S.L."/>
            <person name="Sandelin A."/>
            <person name="Schneider C."/>
            <person name="Schoenbach C."/>
            <person name="Sekiguchi K."/>
            <person name="Semple C.A."/>
            <person name="Seno S."/>
            <person name="Sessa L."/>
            <person name="Sheng Y."/>
            <person name="Shibata Y."/>
            <person name="Shimada H."/>
            <person name="Shimada K."/>
            <person name="Silva D."/>
            <person name="Sinclair B."/>
            <person name="Sperling S."/>
            <person name="Stupka E."/>
            <person name="Sugiura K."/>
            <person name="Sultana R."/>
            <person name="Takenaka Y."/>
            <person name="Taki K."/>
            <person name="Tammoja K."/>
            <person name="Tan S.L."/>
            <person name="Tang S."/>
            <person name="Taylor M.S."/>
            <person name="Tegner J."/>
            <person name="Teichmann S.A."/>
            <person name="Ueda H.R."/>
            <person name="van Nimwegen E."/>
            <person name="Verardo R."/>
            <person name="Wei C.L."/>
            <person name="Yagi K."/>
            <person name="Yamanishi H."/>
            <person name="Zabarovsky E."/>
            <person name="Zhu S."/>
            <person name="Zimmer A."/>
            <person name="Hide W."/>
            <person name="Bult C."/>
            <person name="Grimmond S.M."/>
            <person name="Teasdale R.D."/>
            <person name="Liu E.T."/>
            <person name="Brusic V."/>
            <person name="Quackenbush J."/>
            <person name="Wahlestedt C."/>
            <person name="Mattick J.S."/>
            <person name="Hume D.A."/>
            <person name="Kai C."/>
            <person name="Sasaki D."/>
            <person name="Tomaru Y."/>
            <person name="Fukuda S."/>
            <person name="Kanamori-Katayama M."/>
            <person name="Suzuki M."/>
            <person name="Aoki J."/>
            <person name="Arakawa T."/>
            <person name="Iida J."/>
            <person name="Imamura K."/>
            <person name="Itoh M."/>
            <person name="Kato T."/>
            <person name="Kawaji H."/>
            <person name="Kawagashira N."/>
            <person name="Kawashima T."/>
            <person name="Kojima M."/>
            <person name="Kondo S."/>
            <person name="Konno H."/>
            <person name="Nakano K."/>
            <person name="Ninomiya N."/>
            <person name="Nishio T."/>
            <person name="Okada M."/>
            <person name="Plessy C."/>
            <person name="Shibata K."/>
            <person name="Shiraki T."/>
            <person name="Suzuki S."/>
            <person name="Tagami M."/>
            <person name="Waki K."/>
            <person name="Watahiki A."/>
            <person name="Okamura-Oho Y."/>
            <person name="Suzuki H."/>
            <person name="Kawai J."/>
            <person name="Hayashizaki Y."/>
        </authorList>
    </citation>
    <scope>NUCLEOTIDE SEQUENCE [LARGE SCALE MRNA] OF 894-1078 (ISOFORMS 1/2)</scope>
    <source>
        <strain>C57BL/6J</strain>
        <tissue>Urinary bladder</tissue>
    </source>
</reference>
<reference key="4">
    <citation type="journal article" date="2005" name="J. Cell Biol.">
        <title>Promotion of importin alpha-mediated nuclear import by the phosphorylation-dependent binding of cargo protein to 14-3-3.</title>
        <authorList>
            <person name="Faul C."/>
            <person name="Huettelmaier S."/>
            <person name="Oh J."/>
            <person name="Hachet V."/>
            <person name="Singer R.H."/>
            <person name="Mundel P."/>
        </authorList>
    </citation>
    <scope>SUBCELLULAR LOCATION</scope>
    <scope>INTERACTION WITH YWHAB AND KPNA2</scope>
    <scope>MUTAGENESIS OF SER-555 AND THR-602</scope>
</reference>
<reference key="5">
    <citation type="journal article" date="2005" name="FEBS Lett.">
        <title>A monopartite nuclear localization sequence regulates nuclear targeting of the actin binding protein myopodin.</title>
        <authorList>
            <person name="De Ganck A."/>
            <person name="Hubert T."/>
            <person name="Van Impe K."/>
            <person name="Geelen D."/>
            <person name="Vandekerckhove J."/>
            <person name="De Corte V."/>
            <person name="Gettemans J."/>
        </authorList>
    </citation>
    <scope>SUBCELLULAR LOCATION</scope>
    <scope>NUCLEAR LOCALIZATION SIGNAL</scope>
</reference>
<reference key="6">
    <citation type="journal article" date="2007" name="Mol. Cell. Biol.">
        <title>Protein kinase A, Ca2+/calmodulin-dependent kinase II, and calcineurin regulate the intracellular trafficking of myopodin between the Z-disc and the nucleus of cardiac myocytes.</title>
        <authorList>
            <person name="Faul C."/>
            <person name="Dhume A."/>
            <person name="Schecter A.D."/>
            <person name="Mundel P."/>
        </authorList>
    </citation>
    <scope>INTERACTION WITH AKAP6; PPP3CA; CAMK2A; YWHAB AND ACTN2</scope>
    <scope>PHOSPHORYLATION AT SER-555 AND THR-602</scope>
    <scope>SUBCELLULAR LOCATION</scope>
</reference>
<reference key="7">
    <citation type="journal article" date="2010" name="Cell">
        <title>A tissue-specific atlas of mouse protein phosphorylation and expression.</title>
        <authorList>
            <person name="Huttlin E.L."/>
            <person name="Jedrychowski M.P."/>
            <person name="Elias J.E."/>
            <person name="Goswami T."/>
            <person name="Rad R."/>
            <person name="Beausoleil S.A."/>
            <person name="Villen J."/>
            <person name="Haas W."/>
            <person name="Sowa M.E."/>
            <person name="Gygi S.P."/>
        </authorList>
    </citation>
    <scope>PHOSPHORYLATION [LARGE SCALE ANALYSIS] AT SER-300; SER-541; SER-543; SER-546; SER-596; SER-603; SER-618; SER-767; SER-771; SER-895 AND SER-899</scope>
    <scope>IDENTIFICATION BY MASS SPECTROMETRY [LARGE SCALE ANALYSIS]</scope>
    <source>
        <tissue>Brain</tissue>
        <tissue>Brown adipose tissue</tissue>
        <tissue>Heart</tissue>
        <tissue>Kidney</tissue>
        <tissue>Lung</tissue>
        <tissue>Pancreas</tissue>
        <tissue>Spleen</tissue>
        <tissue>Testis</tissue>
    </source>
</reference>
<accession>Q91YE8</accession>
<accession>Q8C592</accession>
<sequence>MGTGDFICISMTGGAPWGFRLQGGKEEQQPLQVAKIRSQSKASGSGLREGDEVVSINGNPCADLTYPEVIKLMEGITDSLHLLVKRPSSGTSETLDSESETTNHQHLTHEGPMESTTLQIQQATETQSEDFFLAPVQTKVPLTEDQSNAWGYAECPKEEQAPPMLGSQEGHLVEEVILRQKAEAGQPGHVVELQLSLSKERHQCTSGPIVTLQGNDKSTSPDPDWSSQLERTVHINSIPAPEKADTSLTSSTSSGRELRVIQGRDPGGAGLPQVEVILDCSDRLKAEECRLQTGRGCVASPVEGGRSEAPPSLVSFAVSSEGTEHGEDQRSGKDQSRPHKHRARHARLRRSESLSEKQVKEAKSKCKSIALLLTDAPNPNSKGVLMFKKRRRRARKYTLVSYGTGELEREEEEEEDQEAGDKDEISEVAFLGTSESEVDEELLSDVDDNTQVVNFDWDSGLVDIEKRLNRGDKMEMLPDTTGKGALMFAKRRERMEQFTAQNEEEKTGGMAGGGPDALQTDGLRTMTSYQRKEESVRMQSSVSESSFQMGRSLASVPQQNGFSGVSETAGAQRMFPMNRTAKPFLGSMNQPAAPFSPTRSVTSPISDFPAPPPYSAVSPPPEAFSRGVSSPVAGPAQPPPWPQPAPWSQPAFYDSSEQIASRDERIAVPAKRTGILQEAKRRGTTKPMFTFKETKVSPNPELLSLLQNAEGKRGTGGDSGPEEDYLSLGAEACNFMQSSAKQKTPPPVAPKPAVKSPSSSQPVAPVSPVWSPGVAPAQRPAFSTSNPPNPPQVTAVSSIKIAQPAAPPARPASALNLAGPFKGPQAVVVSHNYTPKPSAPTPLVNAAPAGAGGPSNELPGMSGKGAQLFAKRQSRMEKYVVDSDTVQAHTVRAQSPTPSLPASWKYSSNVRAPPPVAYNPIHSPSYPLAAIKSQPPGAQASKTSKKKGKKPLNTLDVMKHQPYQLNASLFTFQPPDSKDGLPQKSTVKVSSAPAMKQALPPRQANVGSPTNAQASSVYSVPAYTSQPNFFAAEATSPVSASPVPVSVPTSPKQESTSTSYFVAPRPKFSAKKSGVTVQVWKPSVVEE</sequence>
<gene>
    <name type="primary">Synpo2</name>
</gene>
<name>SYNP2_MOUSE</name>